<keyword id="KW-0186">Copper</keyword>
<keyword id="KW-1015">Disulfide bond</keyword>
<keyword id="KW-0325">Glycoprotein</keyword>
<keyword id="KW-0479">Metal-binding</keyword>
<keyword id="KW-0560">Oxidoreductase</keyword>
<keyword id="KW-1185">Reference proteome</keyword>
<keyword id="KW-0677">Repeat</keyword>
<keyword id="KW-0964">Secreted</keyword>
<keyword id="KW-0732">Signal</keyword>
<accession>S8FIE4</accession>
<evidence type="ECO:0000250" key="1">
    <source>
        <dbReference type="UniProtKB" id="D0VWU3"/>
    </source>
</evidence>
<evidence type="ECO:0000250" key="2">
    <source>
        <dbReference type="UniProtKB" id="Q70KY3"/>
    </source>
</evidence>
<evidence type="ECO:0000255" key="3"/>
<evidence type="ECO:0000255" key="4">
    <source>
        <dbReference type="PROSITE-ProRule" id="PRU00498"/>
    </source>
</evidence>
<evidence type="ECO:0000269" key="5">
    <source>
    </source>
</evidence>
<evidence type="ECO:0000303" key="6">
    <source>
    </source>
</evidence>
<evidence type="ECO:0000305" key="7"/>
<evidence type="ECO:0000305" key="8">
    <source>
    </source>
</evidence>
<evidence type="ECO:0000312" key="9">
    <source>
        <dbReference type="EMBL" id="EPT01171.1"/>
    </source>
</evidence>
<evidence type="ECO:0000312" key="10">
    <source>
        <dbReference type="Proteomes" id="UP000015241"/>
    </source>
</evidence>
<protein>
    <recommendedName>
        <fullName evidence="6">Laccase-1</fullName>
        <ecNumber evidence="5">1.10.3.2</ecNumber>
    </recommendedName>
    <alternativeName>
        <fullName evidence="6">FpLCC1</fullName>
    </alternativeName>
</protein>
<feature type="signal peptide" evidence="3">
    <location>
        <begin position="1"/>
        <end position="21"/>
    </location>
</feature>
<feature type="chain" id="PRO_5004563691" description="Laccase-1" evidence="3">
    <location>
        <begin position="22"/>
        <end position="539"/>
    </location>
</feature>
<feature type="domain" description="Plastocyanin-like 1" evidence="3">
    <location>
        <begin position="37"/>
        <end position="154"/>
    </location>
</feature>
<feature type="domain" description="Plastocyanin-like 2" evidence="3">
    <location>
        <begin position="166"/>
        <end position="309"/>
    </location>
</feature>
<feature type="domain" description="Plastocyanin-like 3" evidence="3">
    <location>
        <begin position="374"/>
        <end position="495"/>
    </location>
</feature>
<feature type="binding site" description="type 2 copper site" evidence="1">
    <location>
        <position position="88"/>
    </location>
    <ligand>
        <name>Cu cation</name>
        <dbReference type="ChEBI" id="CHEBI:23378"/>
        <label>1</label>
    </ligand>
</feature>
<feature type="binding site" description="type 3 copper site" evidence="1">
    <location>
        <position position="90"/>
    </location>
    <ligand>
        <name>Cu cation</name>
        <dbReference type="ChEBI" id="CHEBI:23378"/>
        <label>2</label>
    </ligand>
</feature>
<feature type="binding site" description="type 3 copper site" evidence="1">
    <location>
        <position position="133"/>
    </location>
    <ligand>
        <name>Cu cation</name>
        <dbReference type="ChEBI" id="CHEBI:23378"/>
        <label>2</label>
    </ligand>
</feature>
<feature type="binding site" description="type 3 copper site" evidence="1">
    <location>
        <position position="135"/>
    </location>
    <ligand>
        <name>Cu cation</name>
        <dbReference type="ChEBI" id="CHEBI:23378"/>
        <label>3</label>
    </ligand>
</feature>
<feature type="binding site" description="type 1 copper site" evidence="1">
    <location>
        <position position="421"/>
    </location>
    <ligand>
        <name>Cu cation</name>
        <dbReference type="ChEBI" id="CHEBI:23378"/>
        <label>4</label>
    </ligand>
</feature>
<feature type="binding site" description="type 2 copper site" evidence="1">
    <location>
        <position position="424"/>
    </location>
    <ligand>
        <name>Cu cation</name>
        <dbReference type="ChEBI" id="CHEBI:23378"/>
        <label>1</label>
    </ligand>
</feature>
<feature type="binding site" description="type 3 copper site" evidence="1">
    <location>
        <position position="426"/>
    </location>
    <ligand>
        <name>Cu cation</name>
        <dbReference type="ChEBI" id="CHEBI:23378"/>
        <label>3</label>
    </ligand>
</feature>
<feature type="binding site" description="type 3 copper site" evidence="1">
    <location>
        <position position="476"/>
    </location>
    <ligand>
        <name>Cu cation</name>
        <dbReference type="ChEBI" id="CHEBI:23378"/>
        <label>3</label>
    </ligand>
</feature>
<feature type="binding site" description="type 1 copper site" evidence="1">
    <location>
        <position position="477"/>
    </location>
    <ligand>
        <name>Cu cation</name>
        <dbReference type="ChEBI" id="CHEBI:23378"/>
        <label>4</label>
    </ligand>
</feature>
<feature type="binding site" description="type 3 copper site" evidence="1">
    <location>
        <position position="478"/>
    </location>
    <ligand>
        <name>Cu cation</name>
        <dbReference type="ChEBI" id="CHEBI:23378"/>
        <label>2</label>
    </ligand>
</feature>
<feature type="binding site" description="type 1 copper site" evidence="1">
    <location>
        <position position="482"/>
    </location>
    <ligand>
        <name>Cu cation</name>
        <dbReference type="ChEBI" id="CHEBI:23378"/>
        <label>4</label>
    </ligand>
</feature>
<feature type="glycosylation site" description="N-linked (GlcNAc...) asparagine" evidence="4">
    <location>
        <position position="78"/>
    </location>
</feature>
<feature type="glycosylation site" description="N-linked (GlcNAc...) asparagine" evidence="4">
    <location>
        <position position="120"/>
    </location>
</feature>
<feature type="glycosylation site" description="N-linked (GlcNAc...) asparagine" evidence="4">
    <location>
        <position position="202"/>
    </location>
</feature>
<feature type="glycosylation site" description="N-linked (GlcNAc...) asparagine" evidence="4">
    <location>
        <position position="233"/>
    </location>
</feature>
<feature type="glycosylation site" description="N-linked (GlcNAc...) asparagine" evidence="4">
    <location>
        <position position="240"/>
    </location>
</feature>
<feature type="glycosylation site" description="N-linked (GlcNAc...) asparagine" evidence="4">
    <location>
        <position position="293"/>
    </location>
</feature>
<feature type="glycosylation site" description="N-linked (GlcNAc...) asparagine" evidence="4">
    <location>
        <position position="318"/>
    </location>
</feature>
<feature type="glycosylation site" description="N-linked (GlcNAc...) asparagine" evidence="4">
    <location>
        <position position="353"/>
    </location>
</feature>
<feature type="glycosylation site" description="N-linked (GlcNAc...) asparagine" evidence="4">
    <location>
        <position position="385"/>
    </location>
</feature>
<feature type="glycosylation site" description="N-linked (GlcNAc...) asparagine" evidence="4">
    <location>
        <position position="405"/>
    </location>
</feature>
<feature type="glycosylation site" description="N-linked (GlcNAc...) asparagine" evidence="4">
    <location>
        <position position="457"/>
    </location>
</feature>
<feature type="glycosylation site" description="N-linked (GlcNAc...) asparagine" evidence="4">
    <location>
        <position position="532"/>
    </location>
</feature>
<feature type="disulfide bond" evidence="2">
    <location>
        <begin position="109"/>
        <end position="513"/>
    </location>
</feature>
<feature type="disulfide bond" evidence="1">
    <location>
        <begin position="141"/>
        <end position="228"/>
    </location>
</feature>
<name>LAC1_FOMSC</name>
<proteinExistence type="evidence at protein level"/>
<sequence>MAFTAISLFLAALGVINTAFAQSAVIGPVTDLDIINAEVNLDGFPRQAVLAGGTFPGPLIKGNKGDNFRINVHDFLYNETMDVTTTIHWHGIFQRHTNWADGPAFVTQCPIAPGNSFLYNFTVPNQAGTFWYHSHEGLQYCDGLRGPFVVYDPEDPHRDLYDVDDESTVITLADWYHEAASLIVPPADPDSVLINGRGRQANDTTSPLAVINVEYGKRYRIRLISVSCDPYFNFTIDGHNFTIIEADGENTDPLPGVDQIQIFAAQRYSFILDANQPIDNYWIRVIPEQVGANGTAATPPGLAVLHYLGAPPFDPKANASQVPISVNPLLEQNLHALGATGVPDLDPSCAECNITLDFTFNTPLFFVNGVTYKSPTVPVLLQILNGSFTAQDLMPEGSVYTLPRNKTIQINMPGGVLGIPHPLHLHGHSFSVIRSANSDETNLYNPVRRDTVSIGTNGSFVAIRFTTDNPGPWFLHCHIDFHLAAGFAVVMAEDPMDVPGYVKPIPPAWDKLCPIYDALPANEQILQPEAANLSTYPQK</sequence>
<organism evidence="10">
    <name type="scientific">Fomitopsis schrenkii</name>
    <name type="common">Brown rot fungus</name>
    <dbReference type="NCBI Taxonomy" id="2126942"/>
    <lineage>
        <taxon>Eukaryota</taxon>
        <taxon>Fungi</taxon>
        <taxon>Dikarya</taxon>
        <taxon>Basidiomycota</taxon>
        <taxon>Agaricomycotina</taxon>
        <taxon>Agaricomycetes</taxon>
        <taxon>Polyporales</taxon>
        <taxon>Fomitopsis</taxon>
    </lineage>
</organism>
<gene>
    <name evidence="6" type="primary">LCC1</name>
    <name evidence="9" type="synonym">Fplcc4</name>
    <name evidence="9" type="ORF">FOMPIDRAFT_45001</name>
</gene>
<comment type="function">
    <text evidence="5 6">In vitro, has activity towards 2,2'-azino-bis(3-ethylbenzthiazoline-6-sulfonic acid) (ABTS), 2,6-dimethoxy-phenol, and guaiacol (PubMed:34116754). Although brown rot fungi preferentially degrade hemicellulose and cellulose, the enzyme may contribute to generating small amounts of lignin breakdown products required for catalytic reactions (PubMed:34116754).</text>
</comment>
<comment type="catalytic activity">
    <reaction evidence="5">
        <text>4 hydroquinone + O2 = 4 benzosemiquinone + 2 H2O</text>
        <dbReference type="Rhea" id="RHEA:11276"/>
        <dbReference type="ChEBI" id="CHEBI:15377"/>
        <dbReference type="ChEBI" id="CHEBI:15379"/>
        <dbReference type="ChEBI" id="CHEBI:17594"/>
        <dbReference type="ChEBI" id="CHEBI:17977"/>
        <dbReference type="EC" id="1.10.3.2"/>
    </reaction>
</comment>
<comment type="cofactor">
    <cofactor evidence="8">
        <name>Cu cation</name>
        <dbReference type="ChEBI" id="CHEBI:23378"/>
    </cofactor>
    <text evidence="2">Binds 4 Cu cations per monomer.</text>
</comment>
<comment type="activity regulation">
    <text evidence="5">Inhibited by chloride ions (PubMed:34116754). Inhibited by citrate (PubMed:34116754). Inhibited by oxalate (PubMed:34116754). Activated by acetate (PubMed:34116754).</text>
</comment>
<comment type="biophysicochemical properties">
    <kinetics>
        <KM evidence="5">59.5 uM for 2,2'-azino-bis(3-ethylbenzthiazoline-6-sulfonic acid) (ABTS) (at pH 3.0 and 30 degrees Celsius)</KM>
        <KM evidence="5">50.9 uM for 2,2'-azino-bis(3-ethylbenzthiazoline-6-sulfonic acid) (ABTS) (at pH 5.0 and 30 degrees Celsius)</KM>
        <KM evidence="5">448 uM for 2,6-dimethoxy-phenol (at pH 3.0 and 30 degrees Celsius)</KM>
        <KM evidence="5">35.1 uM for 2,6-dimethoxy-phenol (at pH 5.0 and 30 degrees Celsius)</KM>
        <KM evidence="5">2140 uM for guaiacol (at pH 3.0 and 30 degrees Celsius)</KM>
        <KM evidence="5">891 uM for guaiacol (at pH 5.0 and 30 degrees Celsius)</KM>
        <text>kcat is 409 sec(-1) with 2,2'-azino-bis(3-ethylbenzthiazoline-6-sulfonic acid) (ABTS) as substrate (at pH 3.0 and 30 degrees Celsius). kcat is 23.1 sec(-1) with 2,2'-azino-bis(3-ethylbenzthiazoline-6-sulfonic acid) (ABTS) as substrate (at pH 5.0 and 30 degrees Celsius). kcat is 102 sec(-1) with 2,6-dimethoxy-phenol as substrate (at pH 3.0 and 30 degrees Celsius). kcat is 7.89 sec(-1) with 2,6-dimethoxy-phenol as substrate (at pH 5.0 and 30 degrees Celsius). cat is 85.1 sec(-1) with guaiacol as substrate (at pH 3.0 and 30 degrees Celsius). kcat is 13.2 sec(-1) with guaiacol as substrate (at pH 5.0 and 30 degrees Celsius).</text>
    </kinetics>
    <phDependence>
        <text>Optimum pH is 2.5 or below with 2,2'-azino-bis(3-ethylbenzthiazoline-6-sulfonic acid) (ABTS) or 2,6-dimethoxy-phenol as substrate, and 3.5 with guaiacol as substrate.</text>
    </phDependence>
</comment>
<comment type="subcellular location">
    <subcellularLocation>
        <location evidence="5">Secreted</location>
    </subcellularLocation>
</comment>
<comment type="induction">
    <text evidence="5">Expressed during growth on poplar wood (at protein level).</text>
</comment>
<comment type="similarity">
    <text evidence="7">Belongs to the multicopper oxidase family.</text>
</comment>
<dbReference type="EC" id="1.10.3.2" evidence="5"/>
<dbReference type="EMBL" id="KE504144">
    <property type="protein sequence ID" value="EPT01171.1"/>
    <property type="molecule type" value="Genomic_DNA"/>
</dbReference>
<dbReference type="SMR" id="S8FIE4"/>
<dbReference type="STRING" id="743788.S8FIE4"/>
<dbReference type="GlyCosmos" id="S8FIE4">
    <property type="glycosylation" value="12 sites, No reported glycans"/>
</dbReference>
<dbReference type="eggNOG" id="KOG1263">
    <property type="taxonomic scope" value="Eukaryota"/>
</dbReference>
<dbReference type="HOGENOM" id="CLU_006504_2_1_1"/>
<dbReference type="InParanoid" id="S8FIE4"/>
<dbReference type="OrthoDB" id="2121828at2759"/>
<dbReference type="Proteomes" id="UP000015241">
    <property type="component" value="Unassembled WGS sequence"/>
</dbReference>
<dbReference type="GO" id="GO:0005576">
    <property type="term" value="C:extracellular region"/>
    <property type="evidence" value="ECO:0007669"/>
    <property type="project" value="UniProtKB-SubCell"/>
</dbReference>
<dbReference type="GO" id="GO:0005507">
    <property type="term" value="F:copper ion binding"/>
    <property type="evidence" value="ECO:0007669"/>
    <property type="project" value="InterPro"/>
</dbReference>
<dbReference type="GO" id="GO:0016682">
    <property type="term" value="F:oxidoreductase activity, acting on diphenols and related substances as donors, oxygen as acceptor"/>
    <property type="evidence" value="ECO:0000314"/>
    <property type="project" value="UniProtKB"/>
</dbReference>
<dbReference type="CDD" id="cd13856">
    <property type="entry name" value="CuRO_1_Tv-LCC_like"/>
    <property type="match status" value="1"/>
</dbReference>
<dbReference type="CDD" id="cd13903">
    <property type="entry name" value="CuRO_3_Tv-LCC_like"/>
    <property type="match status" value="1"/>
</dbReference>
<dbReference type="FunFam" id="2.60.40.420:FF:000045">
    <property type="entry name" value="Laccase 2"/>
    <property type="match status" value="1"/>
</dbReference>
<dbReference type="Gene3D" id="2.60.40.420">
    <property type="entry name" value="Cupredoxins - blue copper proteins"/>
    <property type="match status" value="3"/>
</dbReference>
<dbReference type="InterPro" id="IPR011707">
    <property type="entry name" value="Cu-oxidase-like_N"/>
</dbReference>
<dbReference type="InterPro" id="IPR001117">
    <property type="entry name" value="Cu-oxidase_2nd"/>
</dbReference>
<dbReference type="InterPro" id="IPR011706">
    <property type="entry name" value="Cu-oxidase_C"/>
</dbReference>
<dbReference type="InterPro" id="IPR045087">
    <property type="entry name" value="Cu-oxidase_fam"/>
</dbReference>
<dbReference type="InterPro" id="IPR033138">
    <property type="entry name" value="Cu_oxidase_CS"/>
</dbReference>
<dbReference type="InterPro" id="IPR008972">
    <property type="entry name" value="Cupredoxin"/>
</dbReference>
<dbReference type="PANTHER" id="PTHR11709:SF394">
    <property type="entry name" value="FI03373P-RELATED"/>
    <property type="match status" value="1"/>
</dbReference>
<dbReference type="PANTHER" id="PTHR11709">
    <property type="entry name" value="MULTI-COPPER OXIDASE"/>
    <property type="match status" value="1"/>
</dbReference>
<dbReference type="Pfam" id="PF00394">
    <property type="entry name" value="Cu-oxidase"/>
    <property type="match status" value="1"/>
</dbReference>
<dbReference type="Pfam" id="PF07731">
    <property type="entry name" value="Cu-oxidase_2"/>
    <property type="match status" value="1"/>
</dbReference>
<dbReference type="Pfam" id="PF07732">
    <property type="entry name" value="Cu-oxidase_3"/>
    <property type="match status" value="1"/>
</dbReference>
<dbReference type="SUPFAM" id="SSF49503">
    <property type="entry name" value="Cupredoxins"/>
    <property type="match status" value="3"/>
</dbReference>
<dbReference type="PROSITE" id="PS00079">
    <property type="entry name" value="MULTICOPPER_OXIDASE1"/>
    <property type="match status" value="1"/>
</dbReference>
<reference evidence="10" key="1">
    <citation type="journal article" date="2012" name="Science">
        <title>The Paleozoic origin of enzymatic lignin decomposition reconstructed from 31 fungal genomes.</title>
        <authorList>
            <person name="Floudas D."/>
            <person name="Binder M."/>
            <person name="Riley R."/>
            <person name="Barry K."/>
            <person name="Blanchette R.A."/>
            <person name="Henrissat B."/>
            <person name="Martinez A.T."/>
            <person name="Otillar R."/>
            <person name="Spatafora J.W."/>
            <person name="Yadav J.S."/>
            <person name="Aerts A."/>
            <person name="Benoit I."/>
            <person name="Boyd A."/>
            <person name="Carlson A."/>
            <person name="Copeland A."/>
            <person name="Coutinho P.M."/>
            <person name="de Vries R.P."/>
            <person name="Ferreira P."/>
            <person name="Findley K."/>
            <person name="Foster B."/>
            <person name="Gaskell J."/>
            <person name="Glotzer D."/>
            <person name="Gorecki P."/>
            <person name="Heitman J."/>
            <person name="Hesse C."/>
            <person name="Hori C."/>
            <person name="Igarashi K."/>
            <person name="Jurgens J.A."/>
            <person name="Kallen N."/>
            <person name="Kersten P."/>
            <person name="Kohler A."/>
            <person name="Kuees U."/>
            <person name="Kumar T.K.A."/>
            <person name="Kuo A."/>
            <person name="LaButti K."/>
            <person name="Larrondo L.F."/>
            <person name="Lindquist E."/>
            <person name="Ling A."/>
            <person name="Lombard V."/>
            <person name="Lucas S."/>
            <person name="Lundell T."/>
            <person name="Martin R."/>
            <person name="McLaughlin D.J."/>
            <person name="Morgenstern I."/>
            <person name="Morin E."/>
            <person name="Murat C."/>
            <person name="Nagy L.G."/>
            <person name="Nolan M."/>
            <person name="Ohm R.A."/>
            <person name="Patyshakuliyeva A."/>
            <person name="Rokas A."/>
            <person name="Ruiz-Duenas F.J."/>
            <person name="Sabat G."/>
            <person name="Salamov A."/>
            <person name="Samejima M."/>
            <person name="Schmutz J."/>
            <person name="Slot J.C."/>
            <person name="St John F."/>
            <person name="Stenlid J."/>
            <person name="Sun H."/>
            <person name="Sun S."/>
            <person name="Syed K."/>
            <person name="Tsang A."/>
            <person name="Wiebenga A."/>
            <person name="Young D."/>
            <person name="Pisabarro A."/>
            <person name="Eastwood D.C."/>
            <person name="Martin F."/>
            <person name="Cullen D."/>
            <person name="Grigoriev I.V."/>
            <person name="Hibbett D.S."/>
        </authorList>
    </citation>
    <scope>NUCLEOTIDE SEQUENCE [GENOMIC DNA]</scope>
    <source>
        <strain evidence="10">FP-58527</strain>
    </source>
</reference>
<reference evidence="7" key="2">
    <citation type="journal article" date="2021" name="Enzyme Microb. Technol.">
        <title>Functional expression and characterization of two laccases from the brown rot Fomitopsis pinicola.</title>
        <authorList>
            <person name="Csarman F."/>
            <person name="Obermann T."/>
            <person name="Zanjko M.C."/>
            <person name="Man P."/>
            <person name="Halada P."/>
            <person name="Seiboth B."/>
            <person name="Ludwig R."/>
        </authorList>
    </citation>
    <scope>FUNCTION</scope>
    <scope>CATALYTIC ACTIVITY</scope>
    <scope>COFACTOR</scope>
    <scope>ACTIVITY REGULATION</scope>
    <scope>BIOPHYSICOCHEMICAL PROPERTIES</scope>
    <scope>SUBCELLULAR LOCATION</scope>
    <scope>INDUCTION</scope>
</reference>